<comment type="function">
    <text evidence="1">Required for transport of secretory proteins from the Golgi complex. Catalyzes the transfer of phosphatidylinositol and phosphatidylcholine between membranes in vitro (By similarity).</text>
</comment>
<comment type="subcellular location">
    <subcellularLocation>
        <location evidence="1">Golgi apparatus membrane</location>
        <topology evidence="1">Peripheral membrane protein</topology>
    </subcellularLocation>
    <subcellularLocation>
        <location evidence="1">Cell membrane</location>
        <topology evidence="1">Peripheral membrane protein</topology>
    </subcellularLocation>
</comment>
<comment type="similarity">
    <text evidence="5">Belongs to the SFH family.</text>
</comment>
<comment type="sequence caution" evidence="5">
    <conflict type="erroneous gene model prediction">
        <sequence resource="EMBL-CDS" id="BAB09298"/>
    </conflict>
</comment>
<accession>F4K6D3</accession>
<accession>Q0WVM8</accession>
<accession>Q9FKT2</accession>
<feature type="chain" id="PRO_0000423474" description="Phosphatidylinositol/phosphatidylcholine transfer protein SFH14">
    <location>
        <begin position="1"/>
        <end position="577"/>
    </location>
</feature>
<feature type="domain" description="CRAL-TRIO" evidence="3">
    <location>
        <begin position="136"/>
        <end position="311"/>
    </location>
</feature>
<feature type="region of interest" description="Disordered" evidence="4">
    <location>
        <begin position="1"/>
        <end position="22"/>
    </location>
</feature>
<feature type="region of interest" description="Disordered" evidence="4">
    <location>
        <begin position="364"/>
        <end position="383"/>
    </location>
</feature>
<feature type="coiled-coil region" evidence="2">
    <location>
        <begin position="523"/>
        <end position="550"/>
    </location>
</feature>
<feature type="sequence conflict" description="In Ref. 3; BAE98820." evidence="5" ref="3">
    <original>R</original>
    <variation>S</variation>
    <location>
        <position position="97"/>
    </location>
</feature>
<feature type="sequence conflict" description="In Ref. 3; BAE98820." evidence="5" ref="3">
    <original>W</original>
    <variation>R</variation>
    <location>
        <position position="113"/>
    </location>
</feature>
<sequence>MSGREQTGEKLSDSEYIEEEPRRSRIGNLKKKAFSCSTKLTHPLKMRKGKRKIDFQIPLIEDVRDEKEEKLVSKLRQQLLQKDLLPPVHDDYHMLLRFLKTMEFKIEKTVTAWEEMLKWRKEFGTDRIIQDFNFKELDEVTRHYPQGYHGVDKDGRPIYIERLGKAHPGKLMEVTTIERYLKYHVQEFERTLQEKLPACSVAAKRRVTTTTTILDVEGLGMKNFTPTAANLLATIAKVDCNYYPETLHRMFIVNAGIGFRSFLWPAAQKLLDPMTIAKIQVLEPRSLSKLLEAIDSSQLPEFLGGLCKCPNEGGCLRSNKGPWNDPEIVELVHHMEVNNVPQTTTAPLHVRDYDSTTCTISPKETLKEEPEPEEYYSSTGSRSSMHTCIVPPLSDKASTSDGDKFITTVESIESAQSQLLDADTENTFANTSVREGGQILRFGALREKINSENIFHLVKILLVFPLKLFVLFGFLLPGYWQRQNTVVVPDSSTNNKVLECFDRLKKMEKEFTEISRKQVKIPEANEKLLAESLERIKSLELDLDKTKSVLHITLTKQLQITEQLESQDEERRKGCCF</sequence>
<organism>
    <name type="scientific">Arabidopsis thaliana</name>
    <name type="common">Mouse-ear cress</name>
    <dbReference type="NCBI Taxonomy" id="3702"/>
    <lineage>
        <taxon>Eukaryota</taxon>
        <taxon>Viridiplantae</taxon>
        <taxon>Streptophyta</taxon>
        <taxon>Embryophyta</taxon>
        <taxon>Tracheophyta</taxon>
        <taxon>Spermatophyta</taxon>
        <taxon>Magnoliopsida</taxon>
        <taxon>eudicotyledons</taxon>
        <taxon>Gunneridae</taxon>
        <taxon>Pentapetalae</taxon>
        <taxon>rosids</taxon>
        <taxon>malvids</taxon>
        <taxon>Brassicales</taxon>
        <taxon>Brassicaceae</taxon>
        <taxon>Camelineae</taxon>
        <taxon>Arabidopsis</taxon>
    </lineage>
</organism>
<proteinExistence type="evidence at transcript level"/>
<reference key="1">
    <citation type="journal article" date="1998" name="DNA Res.">
        <title>Structural analysis of Arabidopsis thaliana chromosome 5. V. Sequence features of the regions of 1,381,565 bp covered by twenty one physically assigned P1 and TAC clones.</title>
        <authorList>
            <person name="Kaneko T."/>
            <person name="Kotani H."/>
            <person name="Nakamura Y."/>
            <person name="Sato S."/>
            <person name="Asamizu E."/>
            <person name="Miyajima N."/>
            <person name="Tabata S."/>
        </authorList>
    </citation>
    <scope>NUCLEOTIDE SEQUENCE [LARGE SCALE GENOMIC DNA]</scope>
    <source>
        <strain>cv. Columbia</strain>
    </source>
</reference>
<reference key="2">
    <citation type="journal article" date="2017" name="Plant J.">
        <title>Araport11: a complete reannotation of the Arabidopsis thaliana reference genome.</title>
        <authorList>
            <person name="Cheng C.Y."/>
            <person name="Krishnakumar V."/>
            <person name="Chan A.P."/>
            <person name="Thibaud-Nissen F."/>
            <person name="Schobel S."/>
            <person name="Town C.D."/>
        </authorList>
    </citation>
    <scope>GENOME REANNOTATION</scope>
    <source>
        <strain>cv. Columbia</strain>
    </source>
</reference>
<reference key="3">
    <citation type="submission" date="2006-07" db="EMBL/GenBank/DDBJ databases">
        <title>Large-scale analysis of RIKEN Arabidopsis full-length (RAFL) cDNAs.</title>
        <authorList>
            <person name="Totoki Y."/>
            <person name="Seki M."/>
            <person name="Ishida J."/>
            <person name="Nakajima M."/>
            <person name="Enju A."/>
            <person name="Kamiya A."/>
            <person name="Narusaka M."/>
            <person name="Shin-i T."/>
            <person name="Nakagawa M."/>
            <person name="Sakamoto N."/>
            <person name="Oishi K."/>
            <person name="Kohara Y."/>
            <person name="Kobayashi M."/>
            <person name="Toyoda A."/>
            <person name="Sakaki Y."/>
            <person name="Sakurai T."/>
            <person name="Iida K."/>
            <person name="Akiyama K."/>
            <person name="Satou M."/>
            <person name="Toyoda T."/>
            <person name="Konagaya A."/>
            <person name="Carninci P."/>
            <person name="Kawai J."/>
            <person name="Hayashizaki Y."/>
            <person name="Shinozaki K."/>
        </authorList>
    </citation>
    <scope>NUCLEOTIDE SEQUENCE [LARGE SCALE MRNA]</scope>
    <source>
        <strain>cv. Columbia</strain>
    </source>
</reference>
<reference key="4">
    <citation type="journal article" date="2005" name="J. Cell Biol.">
        <title>A Sec14p-nodulin domain phosphatidylinositol transfer protein polarizes membrane growth of Arabidopsis thaliana root hairs.</title>
        <authorList>
            <person name="Vincent P."/>
            <person name="Chua M."/>
            <person name="Nogue F."/>
            <person name="Fairbrother A."/>
            <person name="Mekeel H."/>
            <person name="Xu Y."/>
            <person name="Allen N."/>
            <person name="Bibikova T.N."/>
            <person name="Gilroy S."/>
            <person name="Bankaitis V.A."/>
        </authorList>
    </citation>
    <scope>GENE FAMILY</scope>
</reference>
<reference key="5">
    <citation type="journal article" date="2006" name="Nat. Chem. Biol.">
        <title>Phosphatidylinositol transfer proteins and cellular nanoreactors for lipid signaling.</title>
        <authorList>
            <person name="Ile K.E."/>
            <person name="Schaaf G."/>
            <person name="Bankaitis V.A."/>
        </authorList>
    </citation>
    <scope>REVIEW</scope>
</reference>
<name>SFH14_ARATH</name>
<evidence type="ECO:0000250" key="1"/>
<evidence type="ECO:0000255" key="2"/>
<evidence type="ECO:0000255" key="3">
    <source>
        <dbReference type="PROSITE-ProRule" id="PRU00056"/>
    </source>
</evidence>
<evidence type="ECO:0000256" key="4">
    <source>
        <dbReference type="SAM" id="MobiDB-lite"/>
    </source>
</evidence>
<evidence type="ECO:0000305" key="5"/>
<gene>
    <name type="primary">SFH14</name>
    <name type="ordered locus">At5g56160</name>
    <name type="ORF">MDA7.22</name>
</gene>
<keyword id="KW-1003">Cell membrane</keyword>
<keyword id="KW-0175">Coiled coil</keyword>
<keyword id="KW-0333">Golgi apparatus</keyword>
<keyword id="KW-0472">Membrane</keyword>
<keyword id="KW-0653">Protein transport</keyword>
<keyword id="KW-1185">Reference proteome</keyword>
<keyword id="KW-0813">Transport</keyword>
<dbReference type="EMBL" id="AB011476">
    <property type="protein sequence ID" value="BAB09298.1"/>
    <property type="status" value="ALT_SEQ"/>
    <property type="molecule type" value="Genomic_DNA"/>
</dbReference>
<dbReference type="EMBL" id="CP002688">
    <property type="protein sequence ID" value="AED96728.1"/>
    <property type="molecule type" value="Genomic_DNA"/>
</dbReference>
<dbReference type="EMBL" id="CP002688">
    <property type="protein sequence ID" value="ANM69494.1"/>
    <property type="molecule type" value="Genomic_DNA"/>
</dbReference>
<dbReference type="EMBL" id="AK226714">
    <property type="protein sequence ID" value="BAE98820.1"/>
    <property type="molecule type" value="mRNA"/>
</dbReference>
<dbReference type="RefSeq" id="NP_001331164.1">
    <property type="nucleotide sequence ID" value="NM_001345180.1"/>
</dbReference>
<dbReference type="RefSeq" id="NP_200427.3">
    <property type="nucleotide sequence ID" value="NM_124998.4"/>
</dbReference>
<dbReference type="SMR" id="F4K6D3"/>
<dbReference type="BioGRID" id="20959">
    <property type="interactions" value="1"/>
</dbReference>
<dbReference type="FunCoup" id="F4K6D3">
    <property type="interactions" value="515"/>
</dbReference>
<dbReference type="STRING" id="3702.F4K6D3"/>
<dbReference type="PaxDb" id="3702-AT5G56160.1"/>
<dbReference type="ProteomicsDB" id="234554"/>
<dbReference type="EnsemblPlants" id="AT5G56160.1">
    <property type="protein sequence ID" value="AT5G56160.1"/>
    <property type="gene ID" value="AT5G56160"/>
</dbReference>
<dbReference type="EnsemblPlants" id="AT5G56160.3">
    <property type="protein sequence ID" value="AT5G56160.3"/>
    <property type="gene ID" value="AT5G56160"/>
</dbReference>
<dbReference type="GeneID" id="835715"/>
<dbReference type="Gramene" id="AT5G56160.1">
    <property type="protein sequence ID" value="AT5G56160.1"/>
    <property type="gene ID" value="AT5G56160"/>
</dbReference>
<dbReference type="Gramene" id="AT5G56160.3">
    <property type="protein sequence ID" value="AT5G56160.3"/>
    <property type="gene ID" value="AT5G56160"/>
</dbReference>
<dbReference type="KEGG" id="ath:AT5G56160"/>
<dbReference type="Araport" id="AT5G56160"/>
<dbReference type="TAIR" id="AT5G56160"/>
<dbReference type="eggNOG" id="KOG1471">
    <property type="taxonomic scope" value="Eukaryota"/>
</dbReference>
<dbReference type="HOGENOM" id="CLU_014001_11_0_1"/>
<dbReference type="InParanoid" id="F4K6D3"/>
<dbReference type="OMA" id="PGYWQRQ"/>
<dbReference type="PRO" id="PR:F4K6D3"/>
<dbReference type="Proteomes" id="UP000006548">
    <property type="component" value="Chromosome 5"/>
</dbReference>
<dbReference type="ExpressionAtlas" id="F4K6D3">
    <property type="expression patterns" value="baseline and differential"/>
</dbReference>
<dbReference type="GO" id="GO:0000139">
    <property type="term" value="C:Golgi membrane"/>
    <property type="evidence" value="ECO:0007669"/>
    <property type="project" value="UniProtKB-SubCell"/>
</dbReference>
<dbReference type="GO" id="GO:0005886">
    <property type="term" value="C:plasma membrane"/>
    <property type="evidence" value="ECO:0007669"/>
    <property type="project" value="UniProtKB-SubCell"/>
</dbReference>
<dbReference type="GO" id="GO:0015031">
    <property type="term" value="P:protein transport"/>
    <property type="evidence" value="ECO:0007669"/>
    <property type="project" value="UniProtKB-KW"/>
</dbReference>
<dbReference type="CDD" id="cd00170">
    <property type="entry name" value="SEC14"/>
    <property type="match status" value="1"/>
</dbReference>
<dbReference type="Gene3D" id="3.40.525.10">
    <property type="entry name" value="CRAL-TRIO lipid binding domain"/>
    <property type="match status" value="1"/>
</dbReference>
<dbReference type="Gene3D" id="1.10.8.20">
    <property type="entry name" value="N-terminal domain of phosphatidylinositol transfer protein sec14p"/>
    <property type="match status" value="1"/>
</dbReference>
<dbReference type="InterPro" id="IPR001251">
    <property type="entry name" value="CRAL-TRIO_dom"/>
</dbReference>
<dbReference type="InterPro" id="IPR036865">
    <property type="entry name" value="CRAL-TRIO_dom_sf"/>
</dbReference>
<dbReference type="InterPro" id="IPR036273">
    <property type="entry name" value="CRAL/TRIO_N_dom_sf"/>
</dbReference>
<dbReference type="InterPro" id="IPR051026">
    <property type="entry name" value="PI/PC_transfer"/>
</dbReference>
<dbReference type="PANTHER" id="PTHR45657">
    <property type="entry name" value="CRAL-TRIO DOMAIN-CONTAINING PROTEIN YKL091C-RELATED"/>
    <property type="match status" value="1"/>
</dbReference>
<dbReference type="PANTHER" id="PTHR45657:SF36">
    <property type="entry name" value="PHOSPHATIDYLINOSITOL_PHOSPHATIDYLCHOLINE TRANSFER PROTEIN SFH14"/>
    <property type="match status" value="1"/>
</dbReference>
<dbReference type="Pfam" id="PF00650">
    <property type="entry name" value="CRAL_TRIO"/>
    <property type="match status" value="1"/>
</dbReference>
<dbReference type="SMART" id="SM00516">
    <property type="entry name" value="SEC14"/>
    <property type="match status" value="1"/>
</dbReference>
<dbReference type="SUPFAM" id="SSF52087">
    <property type="entry name" value="CRAL/TRIO domain"/>
    <property type="match status" value="1"/>
</dbReference>
<dbReference type="SUPFAM" id="SSF46938">
    <property type="entry name" value="CRAL/TRIO N-terminal domain"/>
    <property type="match status" value="1"/>
</dbReference>
<dbReference type="PROSITE" id="PS50191">
    <property type="entry name" value="CRAL_TRIO"/>
    <property type="match status" value="1"/>
</dbReference>
<protein>
    <recommendedName>
        <fullName>Phosphatidylinositol/phosphatidylcholine transfer protein SFH14</fullName>
    </recommendedName>
    <alternativeName>
        <fullName>Protein SEC FOURTEEN HOMOLOGS 14</fullName>
        <shortName>AtSFH14</shortName>
    </alternativeName>
</protein>